<feature type="chain" id="PRO_0000305621" description="Anaerobic nitric oxide reductase transcription regulator NorR">
    <location>
        <begin position="1"/>
        <end position="504"/>
    </location>
</feature>
<feature type="domain" description="Sigma-54 factor interaction" evidence="1">
    <location>
        <begin position="187"/>
        <end position="416"/>
    </location>
</feature>
<feature type="DNA-binding region" description="H-T-H motif" evidence="1">
    <location>
        <begin position="479"/>
        <end position="498"/>
    </location>
</feature>
<feature type="binding site" evidence="1">
    <location>
        <begin position="215"/>
        <end position="222"/>
    </location>
    <ligand>
        <name>ATP</name>
        <dbReference type="ChEBI" id="CHEBI:30616"/>
    </ligand>
</feature>
<feature type="binding site" evidence="1">
    <location>
        <begin position="278"/>
        <end position="287"/>
    </location>
    <ligand>
        <name>ATP</name>
        <dbReference type="ChEBI" id="CHEBI:30616"/>
    </ligand>
</feature>
<feature type="modified residue" description="4-aspartylphosphate" evidence="1">
    <location>
        <position position="57"/>
    </location>
</feature>
<accession>Q0TEH1</accession>
<sequence length="504" mass="55170">MSFSVDVLANIAIELQRGIGHQDRFQRLITTLRQVLECDASALLRYDSRQFIPLAIDGLAKDVLGRRFALEGHPRLEAIARAGDVVRFPADSELPDPYDGLIPGQESLKVHACVGLPLFAGQNLIGALTLDGMQPDQFDVFSDEELRLIAALAAGALSNALLIEQLESQNMLPGDAAPFEAVKQTQMIGLSPGMTQLKKEIEIVAASDLNVLISGETGTGKELVAKAIHEASPRAVNPLVYLNCAALPESVAESELFGHVKGAFTGAISNRSGKFEMADNGTLFLDEIGELSLALQAKLLRVLQYGDIQRVGDDRSLRVDVRVLAATNRDLREEVLAGRFRADLFHRLSVFPLSVPPLRERGDDVILLAGYFCEQCRLRLGLSRVVLSAGARNLLQHYNFPGNVRELEHAIHRAVVLARATRSGDEVILEAQHFAFPEVTLPPPEAAAVPVVKQNLREATEAFQRETIRQALAQNHHNWAACARMLETDVANLHRLAKRLGLKD</sequence>
<evidence type="ECO:0000255" key="1">
    <source>
        <dbReference type="HAMAP-Rule" id="MF_01314"/>
    </source>
</evidence>
<name>NORR_ECOL5</name>
<proteinExistence type="inferred from homology"/>
<protein>
    <recommendedName>
        <fullName evidence="1">Anaerobic nitric oxide reductase transcription regulator NorR</fullName>
    </recommendedName>
</protein>
<gene>
    <name evidence="1" type="primary">norR</name>
    <name type="ordered locus">ECP_2669</name>
</gene>
<reference key="1">
    <citation type="journal article" date="2006" name="Mol. Microbiol.">
        <title>Role of pathogenicity island-associated integrases in the genome plasticity of uropathogenic Escherichia coli strain 536.</title>
        <authorList>
            <person name="Hochhut B."/>
            <person name="Wilde C."/>
            <person name="Balling G."/>
            <person name="Middendorf B."/>
            <person name="Dobrindt U."/>
            <person name="Brzuszkiewicz E."/>
            <person name="Gottschalk G."/>
            <person name="Carniel E."/>
            <person name="Hacker J."/>
        </authorList>
    </citation>
    <scope>NUCLEOTIDE SEQUENCE [LARGE SCALE GENOMIC DNA]</scope>
    <source>
        <strain>536 / UPEC</strain>
    </source>
</reference>
<comment type="function">
    <text evidence="1">Required for the expression of anaerobic nitric oxide (NO) reductase, acts as a transcriptional activator for at least the norVW operon. Activation also requires sigma-54.</text>
</comment>
<comment type="pathway">
    <text evidence="1">Nitrogen metabolism; nitric oxide reduction.</text>
</comment>
<dbReference type="EMBL" id="CP000247">
    <property type="protein sequence ID" value="ABG70658.1"/>
    <property type="molecule type" value="Genomic_DNA"/>
</dbReference>
<dbReference type="RefSeq" id="WP_000010724.1">
    <property type="nucleotide sequence ID" value="NC_008253.1"/>
</dbReference>
<dbReference type="SMR" id="Q0TEH1"/>
<dbReference type="KEGG" id="ecp:ECP_2669"/>
<dbReference type="HOGENOM" id="CLU_000445_125_0_6"/>
<dbReference type="UniPathway" id="UPA00638"/>
<dbReference type="Proteomes" id="UP000009182">
    <property type="component" value="Chromosome"/>
</dbReference>
<dbReference type="GO" id="GO:0005524">
    <property type="term" value="F:ATP binding"/>
    <property type="evidence" value="ECO:0007669"/>
    <property type="project" value="UniProtKB-UniRule"/>
</dbReference>
<dbReference type="GO" id="GO:0016887">
    <property type="term" value="F:ATP hydrolysis activity"/>
    <property type="evidence" value="ECO:0007669"/>
    <property type="project" value="InterPro"/>
</dbReference>
<dbReference type="GO" id="GO:0003677">
    <property type="term" value="F:DNA binding"/>
    <property type="evidence" value="ECO:0007669"/>
    <property type="project" value="UniProtKB-KW"/>
</dbReference>
<dbReference type="GO" id="GO:0003700">
    <property type="term" value="F:DNA-binding transcription factor activity"/>
    <property type="evidence" value="ECO:0007669"/>
    <property type="project" value="UniProtKB-UniRule"/>
</dbReference>
<dbReference type="GO" id="GO:0000160">
    <property type="term" value="P:phosphorelay signal transduction system"/>
    <property type="evidence" value="ECO:0007669"/>
    <property type="project" value="UniProtKB-UniRule"/>
</dbReference>
<dbReference type="CDD" id="cd00009">
    <property type="entry name" value="AAA"/>
    <property type="match status" value="1"/>
</dbReference>
<dbReference type="FunFam" id="1.10.10.60:FF:000188">
    <property type="entry name" value="Anaerobic nitric oxide reductase transcription regulator NorR"/>
    <property type="match status" value="1"/>
</dbReference>
<dbReference type="FunFam" id="1.10.8.60:FF:000045">
    <property type="entry name" value="Anaerobic nitric oxide reductase transcription regulator NorR"/>
    <property type="match status" value="1"/>
</dbReference>
<dbReference type="FunFam" id="3.30.450.40:FF:000021">
    <property type="entry name" value="Anaerobic nitric oxide reductase transcription regulator NorR"/>
    <property type="match status" value="1"/>
</dbReference>
<dbReference type="FunFam" id="3.40.50.300:FF:000006">
    <property type="entry name" value="DNA-binding transcriptional regulator NtrC"/>
    <property type="match status" value="1"/>
</dbReference>
<dbReference type="Gene3D" id="1.10.8.60">
    <property type="match status" value="1"/>
</dbReference>
<dbReference type="Gene3D" id="3.30.450.40">
    <property type="match status" value="1"/>
</dbReference>
<dbReference type="Gene3D" id="1.10.10.60">
    <property type="entry name" value="Homeodomain-like"/>
    <property type="match status" value="1"/>
</dbReference>
<dbReference type="Gene3D" id="3.40.50.300">
    <property type="entry name" value="P-loop containing nucleotide triphosphate hydrolases"/>
    <property type="match status" value="1"/>
</dbReference>
<dbReference type="HAMAP" id="MF_01314">
    <property type="entry name" value="NorR"/>
    <property type="match status" value="1"/>
</dbReference>
<dbReference type="InterPro" id="IPR003593">
    <property type="entry name" value="AAA+_ATPase"/>
</dbReference>
<dbReference type="InterPro" id="IPR003018">
    <property type="entry name" value="GAF"/>
</dbReference>
<dbReference type="InterPro" id="IPR029016">
    <property type="entry name" value="GAF-like_dom_sf"/>
</dbReference>
<dbReference type="InterPro" id="IPR009057">
    <property type="entry name" value="Homeodomain-like_sf"/>
</dbReference>
<dbReference type="InterPro" id="IPR023944">
    <property type="entry name" value="NorR"/>
</dbReference>
<dbReference type="InterPro" id="IPR027417">
    <property type="entry name" value="P-loop_NTPase"/>
</dbReference>
<dbReference type="InterPro" id="IPR002078">
    <property type="entry name" value="Sigma_54_int"/>
</dbReference>
<dbReference type="InterPro" id="IPR025662">
    <property type="entry name" value="Sigma_54_int_dom_ATP-bd_1"/>
</dbReference>
<dbReference type="InterPro" id="IPR025943">
    <property type="entry name" value="Sigma_54_int_dom_ATP-bd_2"/>
</dbReference>
<dbReference type="InterPro" id="IPR025944">
    <property type="entry name" value="Sigma_54_int_dom_CS"/>
</dbReference>
<dbReference type="NCBIfam" id="NF003451">
    <property type="entry name" value="PRK05022.1"/>
    <property type="match status" value="1"/>
</dbReference>
<dbReference type="PANTHER" id="PTHR32071:SF35">
    <property type="entry name" value="ANAEROBIC NITRIC OXIDE REDUCTASE TRANSCRIPTION REGULATOR NORR"/>
    <property type="match status" value="1"/>
</dbReference>
<dbReference type="PANTHER" id="PTHR32071">
    <property type="entry name" value="TRANSCRIPTIONAL REGULATORY PROTEIN"/>
    <property type="match status" value="1"/>
</dbReference>
<dbReference type="Pfam" id="PF01590">
    <property type="entry name" value="GAF"/>
    <property type="match status" value="1"/>
</dbReference>
<dbReference type="Pfam" id="PF00158">
    <property type="entry name" value="Sigma54_activat"/>
    <property type="match status" value="1"/>
</dbReference>
<dbReference type="SMART" id="SM00382">
    <property type="entry name" value="AAA"/>
    <property type="match status" value="1"/>
</dbReference>
<dbReference type="SMART" id="SM00065">
    <property type="entry name" value="GAF"/>
    <property type="match status" value="1"/>
</dbReference>
<dbReference type="SUPFAM" id="SSF55781">
    <property type="entry name" value="GAF domain-like"/>
    <property type="match status" value="1"/>
</dbReference>
<dbReference type="SUPFAM" id="SSF46689">
    <property type="entry name" value="Homeodomain-like"/>
    <property type="match status" value="1"/>
</dbReference>
<dbReference type="SUPFAM" id="SSF52540">
    <property type="entry name" value="P-loop containing nucleoside triphosphate hydrolases"/>
    <property type="match status" value="1"/>
</dbReference>
<dbReference type="PROSITE" id="PS00675">
    <property type="entry name" value="SIGMA54_INTERACT_1"/>
    <property type="match status" value="1"/>
</dbReference>
<dbReference type="PROSITE" id="PS00676">
    <property type="entry name" value="SIGMA54_INTERACT_2"/>
    <property type="match status" value="1"/>
</dbReference>
<dbReference type="PROSITE" id="PS00688">
    <property type="entry name" value="SIGMA54_INTERACT_3"/>
    <property type="match status" value="1"/>
</dbReference>
<dbReference type="PROSITE" id="PS50045">
    <property type="entry name" value="SIGMA54_INTERACT_4"/>
    <property type="match status" value="1"/>
</dbReference>
<keyword id="KW-0067">ATP-binding</keyword>
<keyword id="KW-0238">DNA-binding</keyword>
<keyword id="KW-0547">Nucleotide-binding</keyword>
<keyword id="KW-0597">Phosphoprotein</keyword>
<keyword id="KW-0804">Transcription</keyword>
<keyword id="KW-0805">Transcription regulation</keyword>
<organism>
    <name type="scientific">Escherichia coli O6:K15:H31 (strain 536 / UPEC)</name>
    <dbReference type="NCBI Taxonomy" id="362663"/>
    <lineage>
        <taxon>Bacteria</taxon>
        <taxon>Pseudomonadati</taxon>
        <taxon>Pseudomonadota</taxon>
        <taxon>Gammaproteobacteria</taxon>
        <taxon>Enterobacterales</taxon>
        <taxon>Enterobacteriaceae</taxon>
        <taxon>Escherichia</taxon>
    </lineage>
</organism>